<dbReference type="EMBL" id="J05218">
    <property type="protein sequence ID" value="AAA48563.1"/>
    <property type="molecule type" value="Genomic_DNA"/>
</dbReference>
<dbReference type="PIR" id="A35546">
    <property type="entry name" value="A35546"/>
</dbReference>
<dbReference type="RefSeq" id="NP_001026362.1">
    <property type="nucleotide sequence ID" value="NM_001031191.1"/>
</dbReference>
<dbReference type="SMR" id="P17200"/>
<dbReference type="FunCoup" id="P17200">
    <property type="interactions" value="288"/>
</dbReference>
<dbReference type="STRING" id="9031.ENSGALP00000071382"/>
<dbReference type="BindingDB" id="P17200"/>
<dbReference type="GlyCosmos" id="P17200">
    <property type="glycosylation" value="4 sites, No reported glycans"/>
</dbReference>
<dbReference type="GlyGen" id="P17200">
    <property type="glycosylation" value="4 sites"/>
</dbReference>
<dbReference type="PaxDb" id="9031-ENSGALP00000013605"/>
<dbReference type="GeneID" id="423195"/>
<dbReference type="KEGG" id="gga:423195"/>
<dbReference type="CTD" id="1132"/>
<dbReference type="VEuPathDB" id="HostDB:geneid_423195"/>
<dbReference type="eggNOG" id="KOG4220">
    <property type="taxonomic scope" value="Eukaryota"/>
</dbReference>
<dbReference type="InParanoid" id="P17200"/>
<dbReference type="OrthoDB" id="10071887at2759"/>
<dbReference type="PhylomeDB" id="P17200"/>
<dbReference type="PRO" id="PR:P17200"/>
<dbReference type="Proteomes" id="UP000000539">
    <property type="component" value="Unassembled WGS sequence"/>
</dbReference>
<dbReference type="GO" id="GO:0005886">
    <property type="term" value="C:plasma membrane"/>
    <property type="evidence" value="ECO:0000318"/>
    <property type="project" value="GO_Central"/>
</dbReference>
<dbReference type="GO" id="GO:0045211">
    <property type="term" value="C:postsynaptic membrane"/>
    <property type="evidence" value="ECO:0007669"/>
    <property type="project" value="UniProtKB-SubCell"/>
</dbReference>
<dbReference type="GO" id="GO:0016907">
    <property type="term" value="F:G protein-coupled acetylcholine receptor activity"/>
    <property type="evidence" value="ECO:0000303"/>
    <property type="project" value="UniProtKB"/>
</dbReference>
<dbReference type="GO" id="GO:0004930">
    <property type="term" value="F:G protein-coupled receptor activity"/>
    <property type="evidence" value="ECO:0000318"/>
    <property type="project" value="GO_Central"/>
</dbReference>
<dbReference type="GO" id="GO:0071880">
    <property type="term" value="P:adenylate cyclase-activating adrenergic receptor signaling pathway"/>
    <property type="evidence" value="ECO:0000318"/>
    <property type="project" value="GO_Central"/>
</dbReference>
<dbReference type="GO" id="GO:0007194">
    <property type="term" value="P:negative regulation of adenylate cyclase activity"/>
    <property type="evidence" value="ECO:0000303"/>
    <property type="project" value="UniProtKB"/>
</dbReference>
<dbReference type="GO" id="GO:0046488">
    <property type="term" value="P:phosphatidylinositol metabolic process"/>
    <property type="evidence" value="ECO:0000303"/>
    <property type="project" value="UniProtKB"/>
</dbReference>
<dbReference type="GO" id="GO:0043410">
    <property type="term" value="P:positive regulation of MAPK cascade"/>
    <property type="evidence" value="ECO:0000318"/>
    <property type="project" value="GO_Central"/>
</dbReference>
<dbReference type="GO" id="GO:0040012">
    <property type="term" value="P:regulation of locomotion"/>
    <property type="evidence" value="ECO:0007669"/>
    <property type="project" value="InterPro"/>
</dbReference>
<dbReference type="CDD" id="cd15298">
    <property type="entry name" value="7tmA_mAChR_M4"/>
    <property type="match status" value="1"/>
</dbReference>
<dbReference type="FunFam" id="1.20.1070.10:FF:000038">
    <property type="entry name" value="Muscarinic acetylcholine receptor"/>
    <property type="match status" value="1"/>
</dbReference>
<dbReference type="FunFam" id="1.20.1070.10:FF:000041">
    <property type="entry name" value="Muscarinic acetylcholine receptor"/>
    <property type="match status" value="1"/>
</dbReference>
<dbReference type="Gene3D" id="1.20.1070.10">
    <property type="entry name" value="Rhodopsin 7-helix transmembrane proteins"/>
    <property type="match status" value="2"/>
</dbReference>
<dbReference type="InterPro" id="IPR000276">
    <property type="entry name" value="GPCR_Rhodpsn"/>
</dbReference>
<dbReference type="InterPro" id="IPR017452">
    <property type="entry name" value="GPCR_Rhodpsn_7TM"/>
</dbReference>
<dbReference type="InterPro" id="IPR001432">
    <property type="entry name" value="Musac_Ach_M4_rcpt"/>
</dbReference>
<dbReference type="InterPro" id="IPR000995">
    <property type="entry name" value="Musac_Ach_rcpt"/>
</dbReference>
<dbReference type="PANTHER" id="PTHR24247">
    <property type="entry name" value="5-HYDROXYTRYPTAMINE RECEPTOR"/>
    <property type="match status" value="1"/>
</dbReference>
<dbReference type="PANTHER" id="PTHR24247:SF180">
    <property type="entry name" value="MUSCARINIC ACETYLCHOLINE RECEPTOR M4"/>
    <property type="match status" value="1"/>
</dbReference>
<dbReference type="Pfam" id="PF00001">
    <property type="entry name" value="7tm_1"/>
    <property type="match status" value="1"/>
</dbReference>
<dbReference type="PRINTS" id="PR00237">
    <property type="entry name" value="GPCRRHODOPSN"/>
</dbReference>
<dbReference type="PRINTS" id="PR00243">
    <property type="entry name" value="MUSCARINICR"/>
</dbReference>
<dbReference type="PRINTS" id="PR00541">
    <property type="entry name" value="MUSCRINICM4R"/>
</dbReference>
<dbReference type="SMART" id="SM01381">
    <property type="entry name" value="7TM_GPCR_Srsx"/>
    <property type="match status" value="1"/>
</dbReference>
<dbReference type="SUPFAM" id="SSF81321">
    <property type="entry name" value="Family A G protein-coupled receptor-like"/>
    <property type="match status" value="1"/>
</dbReference>
<dbReference type="PROSITE" id="PS00237">
    <property type="entry name" value="G_PROTEIN_RECEP_F1_1"/>
    <property type="match status" value="1"/>
</dbReference>
<dbReference type="PROSITE" id="PS50262">
    <property type="entry name" value="G_PROTEIN_RECEP_F1_2"/>
    <property type="match status" value="1"/>
</dbReference>
<protein>
    <recommendedName>
        <fullName>Muscarinic acetylcholine receptor M4</fullName>
    </recommendedName>
</protein>
<evidence type="ECO:0000250" key="1"/>
<evidence type="ECO:0000255" key="2"/>
<evidence type="ECO:0000255" key="3">
    <source>
        <dbReference type="PROSITE-ProRule" id="PRU00521"/>
    </source>
</evidence>
<evidence type="ECO:0000256" key="4">
    <source>
        <dbReference type="SAM" id="MobiDB-lite"/>
    </source>
</evidence>
<sequence length="490" mass="54937">MHNLSAQPWQAKMANLTYDNVTLSNRSEVAIQPPTNYKTVELVFIATVTGSLSLVTVVGNILVMLSIKVNRQLQTVNNYFLFSLACADLIIGVFSMNLYTVYIIKGYWPLGAVVCDLWLALDYVVSNASVMNLLIISFDRYFCVTKPLTYPARRTTKMAGLMIAAAWILSFILWAPAILFWQFIVGKRTVHERECYIQFLSNPAVTFGTAIAAFYLPVVIMTVLYIHISLASRSRVRRHKPESRKERKGKSLSFFKAPPVKQNNNNSPKRAVEVKEEVRNGKVDDQPSAQTEATGQQEEKETSNESSTVSMTQTTKDKPTTEILPAGQGQSPAHPRVNPTSKWSKIKIVTKQTGTESVTAIEIVPAKAGASDHNSLSNSRPANVARKFASIARSQVRKKRQMAAREKKVTRTIFAILLAFILTWTPYNVMVLINTFCETCVPETVWSIGYWLCYVNSTINPACYALCNATFKKTFKHLLMCQYRNIGTAR</sequence>
<gene>
    <name type="primary">CHRM4</name>
</gene>
<keyword id="KW-1003">Cell membrane</keyword>
<keyword id="KW-1015">Disulfide bond</keyword>
<keyword id="KW-0297">G-protein coupled receptor</keyword>
<keyword id="KW-0325">Glycoprotein</keyword>
<keyword id="KW-0472">Membrane</keyword>
<keyword id="KW-0597">Phosphoprotein</keyword>
<keyword id="KW-0628">Postsynaptic cell membrane</keyword>
<keyword id="KW-0675">Receptor</keyword>
<keyword id="KW-1185">Reference proteome</keyword>
<keyword id="KW-0770">Synapse</keyword>
<keyword id="KW-0807">Transducer</keyword>
<keyword id="KW-0812">Transmembrane</keyword>
<keyword id="KW-1133">Transmembrane helix</keyword>
<name>ACM4_CHICK</name>
<accession>P17200</accession>
<reference key="1">
    <citation type="journal article" date="1990" name="J. Biol. Chem.">
        <title>Cloning and functional analysis of a gene encoding a novel muscarinic acetylcholine receptor expressed in chick heart and brain.</title>
        <authorList>
            <person name="Tietje K.M."/>
            <person name="Goldman P.S."/>
            <person name="Nathanson N.M."/>
        </authorList>
    </citation>
    <scope>NUCLEOTIDE SEQUENCE [GENOMIC DNA]</scope>
</reference>
<comment type="function">
    <text>The muscarinic acetylcholine receptor mediates various cellular responses, including inhibition of adenylate cyclase, breakdown of phosphoinositides and modulation of potassium channels through the action of G proteins. Primary transducing effect is inhibition of adenylate cyclase. May couple to multiple functional responses in cell lines.</text>
</comment>
<comment type="subcellular location">
    <subcellularLocation>
        <location>Cell membrane</location>
        <topology>Multi-pass membrane protein</topology>
    </subcellularLocation>
    <subcellularLocation>
        <location>Postsynaptic cell membrane</location>
        <topology>Multi-pass membrane protein</topology>
    </subcellularLocation>
</comment>
<comment type="tissue specificity">
    <text>Expressed in heart and brain.</text>
</comment>
<comment type="similarity">
    <text evidence="3">Belongs to the G-protein coupled receptor 1 family. Muscarinic acetylcholine receptor subfamily. CHRM4 sub-subfamily.</text>
</comment>
<proteinExistence type="evidence at transcript level"/>
<feature type="chain" id="PRO_0000069040" description="Muscarinic acetylcholine receptor M4">
    <location>
        <begin position="1"/>
        <end position="490"/>
    </location>
</feature>
<feature type="topological domain" description="Extracellular" evidence="1">
    <location>
        <begin position="1"/>
        <end position="42"/>
    </location>
</feature>
<feature type="transmembrane region" description="Helical; Name=1" evidence="1">
    <location>
        <begin position="43"/>
        <end position="64"/>
    </location>
</feature>
<feature type="topological domain" description="Cytoplasmic" evidence="1">
    <location>
        <begin position="65"/>
        <end position="78"/>
    </location>
</feature>
<feature type="transmembrane region" description="Helical; Name=2" evidence="1">
    <location>
        <begin position="79"/>
        <end position="99"/>
    </location>
</feature>
<feature type="topological domain" description="Extracellular" evidence="1">
    <location>
        <begin position="100"/>
        <end position="116"/>
    </location>
</feature>
<feature type="transmembrane region" description="Helical; Name=3" evidence="1">
    <location>
        <begin position="117"/>
        <end position="138"/>
    </location>
</feature>
<feature type="topological domain" description="Cytoplasmic" evidence="1">
    <location>
        <begin position="139"/>
        <end position="158"/>
    </location>
</feature>
<feature type="transmembrane region" description="Helical; Name=4" evidence="1">
    <location>
        <begin position="159"/>
        <end position="181"/>
    </location>
</feature>
<feature type="topological domain" description="Extracellular" evidence="1">
    <location>
        <begin position="182"/>
        <end position="203"/>
    </location>
</feature>
<feature type="transmembrane region" description="Helical; Name=5" evidence="1">
    <location>
        <begin position="204"/>
        <end position="226"/>
    </location>
</feature>
<feature type="topological domain" description="Cytoplasmic" evidence="1">
    <location>
        <begin position="227"/>
        <end position="412"/>
    </location>
</feature>
<feature type="transmembrane region" description="Helical; Name=6" evidence="1">
    <location>
        <begin position="413"/>
        <end position="433"/>
    </location>
</feature>
<feature type="topological domain" description="Extracellular" evidence="1">
    <location>
        <begin position="434"/>
        <end position="447"/>
    </location>
</feature>
<feature type="transmembrane region" description="Helical; Name=7" evidence="1">
    <location>
        <begin position="448"/>
        <end position="467"/>
    </location>
</feature>
<feature type="topological domain" description="Cytoplasmic" evidence="1">
    <location>
        <begin position="468"/>
        <end position="490"/>
    </location>
</feature>
<feature type="region of interest" description="Disordered" evidence="4">
    <location>
        <begin position="236"/>
        <end position="343"/>
    </location>
</feature>
<feature type="compositionally biased region" description="Basic residues" evidence="4">
    <location>
        <begin position="236"/>
        <end position="250"/>
    </location>
</feature>
<feature type="compositionally biased region" description="Basic and acidic residues" evidence="4">
    <location>
        <begin position="270"/>
        <end position="285"/>
    </location>
</feature>
<feature type="compositionally biased region" description="Polar residues" evidence="4">
    <location>
        <begin position="287"/>
        <end position="296"/>
    </location>
</feature>
<feature type="compositionally biased region" description="Polar residues" evidence="4">
    <location>
        <begin position="304"/>
        <end position="314"/>
    </location>
</feature>
<feature type="glycosylation site" description="N-linked (GlcNAc...) asparagine" evidence="2">
    <location>
        <position position="3"/>
    </location>
</feature>
<feature type="glycosylation site" description="N-linked (GlcNAc...) asparagine" evidence="2">
    <location>
        <position position="15"/>
    </location>
</feature>
<feature type="glycosylation site" description="N-linked (GlcNAc...) asparagine" evidence="2">
    <location>
        <position position="20"/>
    </location>
</feature>
<feature type="glycosylation site" description="N-linked (GlcNAc...) asparagine" evidence="2">
    <location>
        <position position="25"/>
    </location>
</feature>
<feature type="disulfide bond" evidence="3">
    <location>
        <begin position="115"/>
        <end position="195"/>
    </location>
</feature>
<organism>
    <name type="scientific">Gallus gallus</name>
    <name type="common">Chicken</name>
    <dbReference type="NCBI Taxonomy" id="9031"/>
    <lineage>
        <taxon>Eukaryota</taxon>
        <taxon>Metazoa</taxon>
        <taxon>Chordata</taxon>
        <taxon>Craniata</taxon>
        <taxon>Vertebrata</taxon>
        <taxon>Euteleostomi</taxon>
        <taxon>Archelosauria</taxon>
        <taxon>Archosauria</taxon>
        <taxon>Dinosauria</taxon>
        <taxon>Saurischia</taxon>
        <taxon>Theropoda</taxon>
        <taxon>Coelurosauria</taxon>
        <taxon>Aves</taxon>
        <taxon>Neognathae</taxon>
        <taxon>Galloanserae</taxon>
        <taxon>Galliformes</taxon>
        <taxon>Phasianidae</taxon>
        <taxon>Phasianinae</taxon>
        <taxon>Gallus</taxon>
    </lineage>
</organism>